<protein>
    <recommendedName>
        <fullName evidence="1">Pyridoxine/pyridoxamine 5'-phosphate oxidase</fullName>
        <ecNumber evidence="1">1.4.3.5</ecNumber>
    </recommendedName>
    <alternativeName>
        <fullName evidence="1">PNP/PMP oxidase</fullName>
        <shortName evidence="1">PNPOx</shortName>
    </alternativeName>
    <alternativeName>
        <fullName evidence="1">Pyridoxal 5'-phosphate synthase</fullName>
    </alternativeName>
</protein>
<comment type="function">
    <text evidence="1">Catalyzes the oxidation of either pyridoxine 5'-phosphate (PNP) or pyridoxamine 5'-phosphate (PMP) into pyridoxal 5'-phosphate (PLP).</text>
</comment>
<comment type="catalytic activity">
    <reaction evidence="1">
        <text>pyridoxamine 5'-phosphate + O2 + H2O = pyridoxal 5'-phosphate + H2O2 + NH4(+)</text>
        <dbReference type="Rhea" id="RHEA:15817"/>
        <dbReference type="ChEBI" id="CHEBI:15377"/>
        <dbReference type="ChEBI" id="CHEBI:15379"/>
        <dbReference type="ChEBI" id="CHEBI:16240"/>
        <dbReference type="ChEBI" id="CHEBI:28938"/>
        <dbReference type="ChEBI" id="CHEBI:58451"/>
        <dbReference type="ChEBI" id="CHEBI:597326"/>
        <dbReference type="EC" id="1.4.3.5"/>
    </reaction>
</comment>
<comment type="catalytic activity">
    <reaction evidence="1">
        <text>pyridoxine 5'-phosphate + O2 = pyridoxal 5'-phosphate + H2O2</text>
        <dbReference type="Rhea" id="RHEA:15149"/>
        <dbReference type="ChEBI" id="CHEBI:15379"/>
        <dbReference type="ChEBI" id="CHEBI:16240"/>
        <dbReference type="ChEBI" id="CHEBI:58589"/>
        <dbReference type="ChEBI" id="CHEBI:597326"/>
        <dbReference type="EC" id="1.4.3.5"/>
    </reaction>
</comment>
<comment type="cofactor">
    <cofactor evidence="1">
        <name>FMN</name>
        <dbReference type="ChEBI" id="CHEBI:58210"/>
    </cofactor>
    <text evidence="1">Binds 1 FMN per subunit.</text>
</comment>
<comment type="pathway">
    <text evidence="1">Cofactor metabolism; pyridoxal 5'-phosphate salvage; pyridoxal 5'-phosphate from pyridoxamine 5'-phosphate: step 1/1.</text>
</comment>
<comment type="pathway">
    <text evidence="1">Cofactor metabolism; pyridoxal 5'-phosphate salvage; pyridoxal 5'-phosphate from pyridoxine 5'-phosphate: step 1/1.</text>
</comment>
<comment type="subunit">
    <text evidence="1">Homodimer.</text>
</comment>
<comment type="similarity">
    <text evidence="1">Belongs to the pyridoxamine 5'-phosphate oxidase family.</text>
</comment>
<sequence>MELADIRREYTKGGLRRKDLKADPIDQFNLWLEQAIKAGLTDPTAMTVATVDENGMPFQRIVLLKNVDKDGFVFYTNLGSRKAQHLEHNSNISLHFPWHPLERQVHITGVAEKLTAMENMKYFTSRPKDSQLAAIASKQSSRISARGVLEGKFLELKQKFAKGEIPMPTFWGGFRVKPQSIEFWQGGEHRLHDRFLFSQHDGEWDIDRLAP</sequence>
<name>PDXH_VIBPA</name>
<accession>Q87FE9</accession>
<dbReference type="EC" id="1.4.3.5" evidence="1"/>
<dbReference type="EMBL" id="BA000032">
    <property type="protein sequence ID" value="BAC63073.1"/>
    <property type="molecule type" value="Genomic_DNA"/>
</dbReference>
<dbReference type="RefSeq" id="NP_801240.1">
    <property type="nucleotide sequence ID" value="NC_004605.1"/>
</dbReference>
<dbReference type="RefSeq" id="WP_005464858.1">
    <property type="nucleotide sequence ID" value="NC_004605.1"/>
</dbReference>
<dbReference type="SMR" id="Q87FE9"/>
<dbReference type="GeneID" id="1192426"/>
<dbReference type="KEGG" id="vpa:VPA1730"/>
<dbReference type="PATRIC" id="fig|223926.6.peg.4645"/>
<dbReference type="eggNOG" id="COG0259">
    <property type="taxonomic scope" value="Bacteria"/>
</dbReference>
<dbReference type="HOGENOM" id="CLU_032263_2_2_6"/>
<dbReference type="UniPathway" id="UPA01068">
    <property type="reaction ID" value="UER00304"/>
</dbReference>
<dbReference type="UniPathway" id="UPA01068">
    <property type="reaction ID" value="UER00305"/>
</dbReference>
<dbReference type="Proteomes" id="UP000002493">
    <property type="component" value="Chromosome 2"/>
</dbReference>
<dbReference type="GO" id="GO:0010181">
    <property type="term" value="F:FMN binding"/>
    <property type="evidence" value="ECO:0007669"/>
    <property type="project" value="UniProtKB-UniRule"/>
</dbReference>
<dbReference type="GO" id="GO:0004733">
    <property type="term" value="F:pyridoxamine phosphate oxidase activity"/>
    <property type="evidence" value="ECO:0007669"/>
    <property type="project" value="UniProtKB-UniRule"/>
</dbReference>
<dbReference type="GO" id="GO:0008615">
    <property type="term" value="P:pyridoxine biosynthetic process"/>
    <property type="evidence" value="ECO:0007669"/>
    <property type="project" value="UniProtKB-KW"/>
</dbReference>
<dbReference type="Gene3D" id="2.30.110.10">
    <property type="entry name" value="Electron Transport, Fmn-binding Protein, Chain A"/>
    <property type="match status" value="1"/>
</dbReference>
<dbReference type="HAMAP" id="MF_01629">
    <property type="entry name" value="PdxH"/>
    <property type="match status" value="1"/>
</dbReference>
<dbReference type="InterPro" id="IPR000659">
    <property type="entry name" value="Pyridox_Oxase"/>
</dbReference>
<dbReference type="InterPro" id="IPR019740">
    <property type="entry name" value="Pyridox_Oxase_CS"/>
</dbReference>
<dbReference type="InterPro" id="IPR011576">
    <property type="entry name" value="Pyridox_Oxase_N"/>
</dbReference>
<dbReference type="InterPro" id="IPR019576">
    <property type="entry name" value="Pyridoxamine_oxidase_dimer_C"/>
</dbReference>
<dbReference type="InterPro" id="IPR012349">
    <property type="entry name" value="Split_barrel_FMN-bd"/>
</dbReference>
<dbReference type="NCBIfam" id="TIGR00558">
    <property type="entry name" value="pdxH"/>
    <property type="match status" value="1"/>
</dbReference>
<dbReference type="NCBIfam" id="NF004231">
    <property type="entry name" value="PRK05679.1"/>
    <property type="match status" value="1"/>
</dbReference>
<dbReference type="PANTHER" id="PTHR10851:SF0">
    <property type="entry name" value="PYRIDOXINE-5'-PHOSPHATE OXIDASE"/>
    <property type="match status" value="1"/>
</dbReference>
<dbReference type="PANTHER" id="PTHR10851">
    <property type="entry name" value="PYRIDOXINE-5-PHOSPHATE OXIDASE"/>
    <property type="match status" value="1"/>
</dbReference>
<dbReference type="Pfam" id="PF10590">
    <property type="entry name" value="PNP_phzG_C"/>
    <property type="match status" value="1"/>
</dbReference>
<dbReference type="Pfam" id="PF01243">
    <property type="entry name" value="PNPOx_N"/>
    <property type="match status" value="1"/>
</dbReference>
<dbReference type="PIRSF" id="PIRSF000190">
    <property type="entry name" value="Pyd_amn-ph_oxd"/>
    <property type="match status" value="1"/>
</dbReference>
<dbReference type="SUPFAM" id="SSF50475">
    <property type="entry name" value="FMN-binding split barrel"/>
    <property type="match status" value="1"/>
</dbReference>
<dbReference type="PROSITE" id="PS01064">
    <property type="entry name" value="PYRIDOX_OXIDASE"/>
    <property type="match status" value="1"/>
</dbReference>
<proteinExistence type="inferred from homology"/>
<keyword id="KW-0285">Flavoprotein</keyword>
<keyword id="KW-0288">FMN</keyword>
<keyword id="KW-0560">Oxidoreductase</keyword>
<keyword id="KW-0664">Pyridoxine biosynthesis</keyword>
<feature type="chain" id="PRO_0000167767" description="Pyridoxine/pyridoxamine 5'-phosphate oxidase">
    <location>
        <begin position="1"/>
        <end position="211"/>
    </location>
</feature>
<feature type="binding site" evidence="1">
    <location>
        <begin position="7"/>
        <end position="10"/>
    </location>
    <ligand>
        <name>substrate</name>
    </ligand>
</feature>
<feature type="binding site" evidence="1">
    <location>
        <begin position="60"/>
        <end position="65"/>
    </location>
    <ligand>
        <name>FMN</name>
        <dbReference type="ChEBI" id="CHEBI:58210"/>
    </ligand>
</feature>
<feature type="binding site" evidence="1">
    <location>
        <position position="65"/>
    </location>
    <ligand>
        <name>substrate</name>
    </ligand>
</feature>
<feature type="binding site" evidence="1">
    <location>
        <begin position="75"/>
        <end position="76"/>
    </location>
    <ligand>
        <name>FMN</name>
        <dbReference type="ChEBI" id="CHEBI:58210"/>
    </ligand>
</feature>
<feature type="binding site" evidence="1">
    <location>
        <position position="81"/>
    </location>
    <ligand>
        <name>FMN</name>
        <dbReference type="ChEBI" id="CHEBI:58210"/>
    </ligand>
</feature>
<feature type="binding site" evidence="1">
    <location>
        <position position="82"/>
    </location>
    <ligand>
        <name>FMN</name>
        <dbReference type="ChEBI" id="CHEBI:58210"/>
    </ligand>
</feature>
<feature type="binding site" evidence="1">
    <location>
        <position position="104"/>
    </location>
    <ligand>
        <name>FMN</name>
        <dbReference type="ChEBI" id="CHEBI:58210"/>
    </ligand>
</feature>
<feature type="binding site" evidence="1">
    <location>
        <position position="122"/>
    </location>
    <ligand>
        <name>substrate</name>
    </ligand>
</feature>
<feature type="binding site" evidence="1">
    <location>
        <position position="126"/>
    </location>
    <ligand>
        <name>substrate</name>
    </ligand>
</feature>
<feature type="binding site" evidence="1">
    <location>
        <position position="130"/>
    </location>
    <ligand>
        <name>substrate</name>
    </ligand>
</feature>
<feature type="binding site" evidence="1">
    <location>
        <begin position="139"/>
        <end position="140"/>
    </location>
    <ligand>
        <name>FMN</name>
        <dbReference type="ChEBI" id="CHEBI:58210"/>
    </ligand>
</feature>
<feature type="binding site" evidence="1">
    <location>
        <position position="184"/>
    </location>
    <ligand>
        <name>FMN</name>
        <dbReference type="ChEBI" id="CHEBI:58210"/>
    </ligand>
</feature>
<feature type="binding site" evidence="1">
    <location>
        <begin position="190"/>
        <end position="192"/>
    </location>
    <ligand>
        <name>substrate</name>
    </ligand>
</feature>
<feature type="binding site" evidence="1">
    <location>
        <position position="194"/>
    </location>
    <ligand>
        <name>FMN</name>
        <dbReference type="ChEBI" id="CHEBI:58210"/>
    </ligand>
</feature>
<evidence type="ECO:0000255" key="1">
    <source>
        <dbReference type="HAMAP-Rule" id="MF_01629"/>
    </source>
</evidence>
<gene>
    <name evidence="1" type="primary">pdxH</name>
    <name type="ordered locus">VPA1730</name>
</gene>
<organism>
    <name type="scientific">Vibrio parahaemolyticus serotype O3:K6 (strain RIMD 2210633)</name>
    <dbReference type="NCBI Taxonomy" id="223926"/>
    <lineage>
        <taxon>Bacteria</taxon>
        <taxon>Pseudomonadati</taxon>
        <taxon>Pseudomonadota</taxon>
        <taxon>Gammaproteobacteria</taxon>
        <taxon>Vibrionales</taxon>
        <taxon>Vibrionaceae</taxon>
        <taxon>Vibrio</taxon>
    </lineage>
</organism>
<reference key="1">
    <citation type="journal article" date="2003" name="Lancet">
        <title>Genome sequence of Vibrio parahaemolyticus: a pathogenic mechanism distinct from that of V. cholerae.</title>
        <authorList>
            <person name="Makino K."/>
            <person name="Oshima K."/>
            <person name="Kurokawa K."/>
            <person name="Yokoyama K."/>
            <person name="Uda T."/>
            <person name="Tagomori K."/>
            <person name="Iijima Y."/>
            <person name="Najima M."/>
            <person name="Nakano M."/>
            <person name="Yamashita A."/>
            <person name="Kubota Y."/>
            <person name="Kimura S."/>
            <person name="Yasunaga T."/>
            <person name="Honda T."/>
            <person name="Shinagawa H."/>
            <person name="Hattori M."/>
            <person name="Iida T."/>
        </authorList>
    </citation>
    <scope>NUCLEOTIDE SEQUENCE [LARGE SCALE GENOMIC DNA]</scope>
    <source>
        <strain>RIMD 2210633</strain>
    </source>
</reference>